<name>ACCD_PSYCK</name>
<evidence type="ECO:0000255" key="1">
    <source>
        <dbReference type="HAMAP-Rule" id="MF_01395"/>
    </source>
</evidence>
<evidence type="ECO:0000255" key="2">
    <source>
        <dbReference type="PROSITE-ProRule" id="PRU01136"/>
    </source>
</evidence>
<evidence type="ECO:0000256" key="3">
    <source>
        <dbReference type="SAM" id="MobiDB-lite"/>
    </source>
</evidence>
<protein>
    <recommendedName>
        <fullName evidence="1">Acetyl-coenzyme A carboxylase carboxyl transferase subunit beta</fullName>
        <shortName evidence="1">ACCase subunit beta</shortName>
        <shortName evidence="1">Acetyl-CoA carboxylase carboxyltransferase subunit beta</shortName>
        <ecNumber evidence="1">2.1.3.15</ecNumber>
    </recommendedName>
</protein>
<reference key="1">
    <citation type="submission" date="2006-03" db="EMBL/GenBank/DDBJ databases">
        <title>Complete sequence of chromosome of Psychrobacter cryohalolentis K5.</title>
        <authorList>
            <consortium name="US DOE Joint Genome Institute"/>
            <person name="Copeland A."/>
            <person name="Lucas S."/>
            <person name="Lapidus A."/>
            <person name="Barry K."/>
            <person name="Detter J.C."/>
            <person name="Glavina T."/>
            <person name="Hammon N."/>
            <person name="Israni S."/>
            <person name="Dalin E."/>
            <person name="Tice H."/>
            <person name="Pitluck S."/>
            <person name="Brettin T."/>
            <person name="Bruce D."/>
            <person name="Han C."/>
            <person name="Tapia R."/>
            <person name="Sims D.R."/>
            <person name="Gilna P."/>
            <person name="Schmutz J."/>
            <person name="Larimer F."/>
            <person name="Land M."/>
            <person name="Hauser L."/>
            <person name="Kyrpides N."/>
            <person name="Kim E."/>
            <person name="Richardson P."/>
        </authorList>
    </citation>
    <scope>NUCLEOTIDE SEQUENCE [LARGE SCALE GENOMIC DNA]</scope>
    <source>
        <strain>ATCC BAA-1226 / DSM 17306 / VKM B-2378 / K5</strain>
    </source>
</reference>
<dbReference type="EC" id="2.1.3.15" evidence="1"/>
<dbReference type="EMBL" id="CP000323">
    <property type="protein sequence ID" value="ABE74252.1"/>
    <property type="molecule type" value="Genomic_DNA"/>
</dbReference>
<dbReference type="RefSeq" id="WP_011512837.1">
    <property type="nucleotide sequence ID" value="NC_007969.1"/>
</dbReference>
<dbReference type="SMR" id="Q1QDK1"/>
<dbReference type="STRING" id="335284.Pcryo_0469"/>
<dbReference type="KEGG" id="pcr:Pcryo_0469"/>
<dbReference type="eggNOG" id="COG0777">
    <property type="taxonomic scope" value="Bacteria"/>
</dbReference>
<dbReference type="HOGENOM" id="CLU_015486_1_0_6"/>
<dbReference type="UniPathway" id="UPA00655">
    <property type="reaction ID" value="UER00711"/>
</dbReference>
<dbReference type="Proteomes" id="UP000002425">
    <property type="component" value="Chromosome"/>
</dbReference>
<dbReference type="GO" id="GO:0009329">
    <property type="term" value="C:acetate CoA-transferase complex"/>
    <property type="evidence" value="ECO:0007669"/>
    <property type="project" value="TreeGrafter"/>
</dbReference>
<dbReference type="GO" id="GO:0003989">
    <property type="term" value="F:acetyl-CoA carboxylase activity"/>
    <property type="evidence" value="ECO:0007669"/>
    <property type="project" value="InterPro"/>
</dbReference>
<dbReference type="GO" id="GO:0005524">
    <property type="term" value="F:ATP binding"/>
    <property type="evidence" value="ECO:0007669"/>
    <property type="project" value="UniProtKB-KW"/>
</dbReference>
<dbReference type="GO" id="GO:0016743">
    <property type="term" value="F:carboxyl- or carbamoyltransferase activity"/>
    <property type="evidence" value="ECO:0007669"/>
    <property type="project" value="UniProtKB-UniRule"/>
</dbReference>
<dbReference type="GO" id="GO:0008270">
    <property type="term" value="F:zinc ion binding"/>
    <property type="evidence" value="ECO:0007669"/>
    <property type="project" value="UniProtKB-UniRule"/>
</dbReference>
<dbReference type="GO" id="GO:0006633">
    <property type="term" value="P:fatty acid biosynthetic process"/>
    <property type="evidence" value="ECO:0007669"/>
    <property type="project" value="UniProtKB-KW"/>
</dbReference>
<dbReference type="GO" id="GO:2001295">
    <property type="term" value="P:malonyl-CoA biosynthetic process"/>
    <property type="evidence" value="ECO:0007669"/>
    <property type="project" value="UniProtKB-UniRule"/>
</dbReference>
<dbReference type="Gene3D" id="3.90.226.10">
    <property type="entry name" value="2-enoyl-CoA Hydratase, Chain A, domain 1"/>
    <property type="match status" value="1"/>
</dbReference>
<dbReference type="HAMAP" id="MF_01395">
    <property type="entry name" value="AcetylCoA_CT_beta"/>
    <property type="match status" value="1"/>
</dbReference>
<dbReference type="InterPro" id="IPR034733">
    <property type="entry name" value="AcCoA_carboxyl_beta"/>
</dbReference>
<dbReference type="InterPro" id="IPR000438">
    <property type="entry name" value="Acetyl_CoA_COase_Trfase_b_su"/>
</dbReference>
<dbReference type="InterPro" id="IPR029045">
    <property type="entry name" value="ClpP/crotonase-like_dom_sf"/>
</dbReference>
<dbReference type="InterPro" id="IPR011762">
    <property type="entry name" value="COA_CT_N"/>
</dbReference>
<dbReference type="NCBIfam" id="TIGR00515">
    <property type="entry name" value="accD"/>
    <property type="match status" value="1"/>
</dbReference>
<dbReference type="PANTHER" id="PTHR42995">
    <property type="entry name" value="ACETYL-COENZYME A CARBOXYLASE CARBOXYL TRANSFERASE SUBUNIT BETA, CHLOROPLASTIC"/>
    <property type="match status" value="1"/>
</dbReference>
<dbReference type="PANTHER" id="PTHR42995:SF5">
    <property type="entry name" value="ACETYL-COENZYME A CARBOXYLASE CARBOXYL TRANSFERASE SUBUNIT BETA, CHLOROPLASTIC"/>
    <property type="match status" value="1"/>
</dbReference>
<dbReference type="Pfam" id="PF01039">
    <property type="entry name" value="Carboxyl_trans"/>
    <property type="match status" value="1"/>
</dbReference>
<dbReference type="PRINTS" id="PR01070">
    <property type="entry name" value="ACCCTRFRASEB"/>
</dbReference>
<dbReference type="SUPFAM" id="SSF52096">
    <property type="entry name" value="ClpP/crotonase"/>
    <property type="match status" value="1"/>
</dbReference>
<dbReference type="PROSITE" id="PS50980">
    <property type="entry name" value="COA_CT_NTER"/>
    <property type="match status" value="1"/>
</dbReference>
<sequence length="317" mass="35014">MANNMTDTMTKPDINNDSTSLQQNGNKAGQSWFERPIPGIKQQLTAQLTAVETEPSTKCSSCHSIITNTALIFNCYVCPHCDHHLPMSARERLNWLLDQVEGELGQEFTAKDPLKFVDSKPYPSRMAEAQEKTKESEALIVLYGKLRNLDIVTCAFDFRFMGGSMGSVVGDRFVQAAEKALADRVPLVCFAASGGARMQEGLLSLMQMARTAAAIERLRIAGVPYIVVLTNPVYGGVTASLAMLGDIHLAEPKAMIGFAGKRVIEQTVRETLEEPFQRAEFLLEHGVVDEVVHRHQMIDTIYRLLAKLCSVPNVDVQ</sequence>
<accession>Q1QDK1</accession>
<comment type="function">
    <text evidence="1">Component of the acetyl coenzyme A carboxylase (ACC) complex. Biotin carboxylase (BC) catalyzes the carboxylation of biotin on its carrier protein (BCCP) and then the CO(2) group is transferred by the transcarboxylase to acetyl-CoA to form malonyl-CoA.</text>
</comment>
<comment type="catalytic activity">
    <reaction evidence="1">
        <text>N(6)-carboxybiotinyl-L-lysyl-[protein] + acetyl-CoA = N(6)-biotinyl-L-lysyl-[protein] + malonyl-CoA</text>
        <dbReference type="Rhea" id="RHEA:54728"/>
        <dbReference type="Rhea" id="RHEA-COMP:10505"/>
        <dbReference type="Rhea" id="RHEA-COMP:10506"/>
        <dbReference type="ChEBI" id="CHEBI:57288"/>
        <dbReference type="ChEBI" id="CHEBI:57384"/>
        <dbReference type="ChEBI" id="CHEBI:83144"/>
        <dbReference type="ChEBI" id="CHEBI:83145"/>
        <dbReference type="EC" id="2.1.3.15"/>
    </reaction>
</comment>
<comment type="cofactor">
    <cofactor evidence="1">
        <name>Zn(2+)</name>
        <dbReference type="ChEBI" id="CHEBI:29105"/>
    </cofactor>
    <text evidence="1">Binds 1 zinc ion per subunit.</text>
</comment>
<comment type="pathway">
    <text evidence="1">Lipid metabolism; malonyl-CoA biosynthesis; malonyl-CoA from acetyl-CoA: step 1/1.</text>
</comment>
<comment type="subunit">
    <text evidence="1">Acetyl-CoA carboxylase is a heterohexamer composed of biotin carboxyl carrier protein (AccB), biotin carboxylase (AccC) and two subunits each of ACCase subunit alpha (AccA) and ACCase subunit beta (AccD).</text>
</comment>
<comment type="subcellular location">
    <subcellularLocation>
        <location evidence="1">Cytoplasm</location>
    </subcellularLocation>
</comment>
<comment type="similarity">
    <text evidence="1">Belongs to the AccD/PCCB family.</text>
</comment>
<proteinExistence type="inferred from homology"/>
<organism>
    <name type="scientific">Psychrobacter cryohalolentis (strain ATCC BAA-1226 / DSM 17306 / VKM B-2378 / K5)</name>
    <dbReference type="NCBI Taxonomy" id="335284"/>
    <lineage>
        <taxon>Bacteria</taxon>
        <taxon>Pseudomonadati</taxon>
        <taxon>Pseudomonadota</taxon>
        <taxon>Gammaproteobacteria</taxon>
        <taxon>Moraxellales</taxon>
        <taxon>Moraxellaceae</taxon>
        <taxon>Psychrobacter</taxon>
    </lineage>
</organism>
<keyword id="KW-0067">ATP-binding</keyword>
<keyword id="KW-0963">Cytoplasm</keyword>
<keyword id="KW-0275">Fatty acid biosynthesis</keyword>
<keyword id="KW-0276">Fatty acid metabolism</keyword>
<keyword id="KW-0444">Lipid biosynthesis</keyword>
<keyword id="KW-0443">Lipid metabolism</keyword>
<keyword id="KW-0479">Metal-binding</keyword>
<keyword id="KW-0547">Nucleotide-binding</keyword>
<keyword id="KW-0808">Transferase</keyword>
<keyword id="KW-0862">Zinc</keyword>
<keyword id="KW-0863">Zinc-finger</keyword>
<gene>
    <name evidence="1" type="primary">accD</name>
    <name type="ordered locus">Pcryo_0469</name>
</gene>
<feature type="chain" id="PRO_0000389822" description="Acetyl-coenzyme A carboxylase carboxyl transferase subunit beta">
    <location>
        <begin position="1"/>
        <end position="317"/>
    </location>
</feature>
<feature type="domain" description="CoA carboxyltransferase N-terminal" evidence="2">
    <location>
        <begin position="55"/>
        <end position="317"/>
    </location>
</feature>
<feature type="zinc finger region" description="C4-type" evidence="1">
    <location>
        <begin position="59"/>
        <end position="81"/>
    </location>
</feature>
<feature type="region of interest" description="Disordered" evidence="3">
    <location>
        <begin position="1"/>
        <end position="28"/>
    </location>
</feature>
<feature type="binding site" evidence="1">
    <location>
        <position position="59"/>
    </location>
    <ligand>
        <name>Zn(2+)</name>
        <dbReference type="ChEBI" id="CHEBI:29105"/>
    </ligand>
</feature>
<feature type="binding site" evidence="1">
    <location>
        <position position="62"/>
    </location>
    <ligand>
        <name>Zn(2+)</name>
        <dbReference type="ChEBI" id="CHEBI:29105"/>
    </ligand>
</feature>
<feature type="binding site" evidence="1">
    <location>
        <position position="78"/>
    </location>
    <ligand>
        <name>Zn(2+)</name>
        <dbReference type="ChEBI" id="CHEBI:29105"/>
    </ligand>
</feature>
<feature type="binding site" evidence="1">
    <location>
        <position position="81"/>
    </location>
    <ligand>
        <name>Zn(2+)</name>
        <dbReference type="ChEBI" id="CHEBI:29105"/>
    </ligand>
</feature>